<keyword id="KW-0007">Acetylation</keyword>
<keyword id="KW-1003">Cell membrane</keyword>
<keyword id="KW-0966">Cell projection</keyword>
<keyword id="KW-0472">Membrane</keyword>
<keyword id="KW-1185">Reference proteome</keyword>
<keyword id="KW-0812">Transmembrane</keyword>
<keyword id="KW-1133">Transmembrane helix</keyword>
<comment type="function">
    <text evidence="1">Part of the WAVE complex that regulates lamellipodia formation. The WAVE complex regulates actin filament reorganization via its interaction with the Arp2/3 complex. Actin remodeling activity is regulated by RAC1 (By similarity). As component of the WAVE1 complex, required for BDNF-NTRK2 endocytic trafficking and signaling from early endosomes (By similarity).</text>
</comment>
<comment type="subunit">
    <text evidence="1 2">Component of the WAVE1 complex composed of ABI2, CYFIP1 or CYFIP2, BRK1, NCKAP1 and WASF1/WAVE1. Within the complex, a heterodimer containing NCKAP1 and CYFIP1 interacts with a heterotrimer formed by WAVE1, ABI2 and BRK1. Component of the WAVE2 complex composed of ABI1, CYFIP1/SRA1, NCKAP1/NAP1 and WASF2/WAVE2. CYFIP2 binds to activated RAC1 which causes the complex to dissociate, releasing activated WASF1. The complex can also be activated by NCK1. Associates preferentially with the first SH3 domain of NCK. Interacts with NYAP1, NYAP2 and MYO16 (By similarity). Interacts with TMEM132D (By similarity).</text>
</comment>
<comment type="subcellular location">
    <subcellularLocation>
        <location evidence="1">Cell membrane</location>
        <topology evidence="1">Single-pass membrane protein</topology>
        <orientation evidence="1">Cytoplasmic side</orientation>
    </subcellularLocation>
    <subcellularLocation>
        <location evidence="1">Cell projection</location>
        <location evidence="1">Lamellipodium membrane</location>
        <topology evidence="1">Single-pass membrane protein</topology>
        <orientation evidence="1">Cytoplasmic side</orientation>
    </subcellularLocation>
    <text evidence="1">At the interface between the lamellipodial actin meshwork and the membrane.</text>
</comment>
<comment type="tissue specificity">
    <text>Preferentially expressed in brain, heart, liver and testis.</text>
</comment>
<comment type="similarity">
    <text evidence="5">Belongs to the HEM-1/HEM-2 family.</text>
</comment>
<reference key="1">
    <citation type="journal article" date="1996" name="Biochem. Biophys. Res. Commun.">
        <title>Molecular cloning of p125Nap1, a protein that associates with an SH3 domain of Nck.</title>
        <authorList>
            <person name="Kitamura T."/>
            <person name="Kitamura Y."/>
            <person name="Yonezawa K."/>
            <person name="Totty N.F."/>
            <person name="Gout I."/>
            <person name="Hara K."/>
            <person name="Waterfield M.D."/>
            <person name="Sakaue M."/>
            <person name="Ogawa W."/>
            <person name="Kasuga M."/>
        </authorList>
    </citation>
    <scope>NUCLEOTIDE SEQUENCE [MRNA]</scope>
    <source>
        <tissue>Brain</tissue>
    </source>
</reference>
<reference key="2">
    <citation type="journal article" date="1995" name="J. Mol. Biol.">
        <title>The HEM proteins: a novel family of tissue-specific transmembrane proteins expressed from invertebrates through mammals with an essential function in oogenesis.</title>
        <authorList>
            <person name="Baumgartner S."/>
            <person name="Martin D."/>
            <person name="Chiquet-Ehrismann R."/>
            <person name="Sutton J."/>
            <person name="Desai A."/>
            <person name="Huang I."/>
            <person name="Kato K."/>
            <person name="Hromas R."/>
        </authorList>
    </citation>
    <scope>NUCLEOTIDE SEQUENCE [MRNA]</scope>
    <source>
        <tissue>Brain</tissue>
    </source>
</reference>
<accession>P55161</accession>
<organism>
    <name type="scientific">Rattus norvegicus</name>
    <name type="common">Rat</name>
    <dbReference type="NCBI Taxonomy" id="10116"/>
    <lineage>
        <taxon>Eukaryota</taxon>
        <taxon>Metazoa</taxon>
        <taxon>Chordata</taxon>
        <taxon>Craniata</taxon>
        <taxon>Vertebrata</taxon>
        <taxon>Euteleostomi</taxon>
        <taxon>Mammalia</taxon>
        <taxon>Eutheria</taxon>
        <taxon>Euarchontoglires</taxon>
        <taxon>Glires</taxon>
        <taxon>Rodentia</taxon>
        <taxon>Myomorpha</taxon>
        <taxon>Muroidea</taxon>
        <taxon>Muridae</taxon>
        <taxon>Murinae</taxon>
        <taxon>Rattus</taxon>
    </lineage>
</organism>
<protein>
    <recommendedName>
        <fullName>Nck-associated protein 1</fullName>
        <shortName>NAP 1</shortName>
    </recommendedName>
    <alternativeName>
        <fullName>Membrane-associated protein HEM-2</fullName>
    </alternativeName>
    <alternativeName>
        <fullName>p125Nap1</fullName>
    </alternativeName>
</protein>
<evidence type="ECO:0000250" key="1">
    <source>
        <dbReference type="UniProtKB" id="P28660"/>
    </source>
</evidence>
<evidence type="ECO:0000250" key="2">
    <source>
        <dbReference type="UniProtKB" id="Q9Y2A7"/>
    </source>
</evidence>
<evidence type="ECO:0000255" key="3"/>
<evidence type="ECO:0000256" key="4">
    <source>
        <dbReference type="SAM" id="MobiDB-lite"/>
    </source>
</evidence>
<evidence type="ECO:0000305" key="5"/>
<name>NCKP1_RAT</name>
<feature type="initiator methionine" description="Removed" evidence="2">
    <location>
        <position position="1"/>
    </location>
</feature>
<feature type="chain" id="PRO_0000216174" description="Nck-associated protein 1">
    <location>
        <begin position="2"/>
        <end position="1128"/>
    </location>
</feature>
<feature type="transmembrane region" description="Helical" evidence="3">
    <location>
        <begin position="995"/>
        <end position="1015"/>
    </location>
</feature>
<feature type="region of interest" description="Disordered" evidence="4">
    <location>
        <begin position="640"/>
        <end position="665"/>
    </location>
</feature>
<feature type="compositionally biased region" description="Basic and acidic residues" evidence="4">
    <location>
        <begin position="651"/>
        <end position="665"/>
    </location>
</feature>
<feature type="modified residue" description="N-acetylserine" evidence="2">
    <location>
        <position position="2"/>
    </location>
</feature>
<feature type="sequence conflict" description="In Ref. 2; CAA56333." evidence="5" ref="2">
    <original>SRSVLQPSQQKLAEKLTILNDRGVGMLTR</original>
    <variation>LRGTEIVYIKFVLKFFKRNS</variation>
    <location>
        <begin position="2"/>
        <end position="30"/>
    </location>
</feature>
<feature type="sequence conflict" description="In Ref. 2; CAA56333." evidence="5" ref="2">
    <original>L</original>
    <variation>M</variation>
    <location>
        <position position="90"/>
    </location>
</feature>
<feature type="sequence conflict" description="In Ref. 2; CAA56333." evidence="5" ref="2">
    <original>EFK</original>
    <variation>DLR</variation>
    <location>
        <begin position="102"/>
        <end position="104"/>
    </location>
</feature>
<feature type="sequence conflict" description="In Ref. 2; CAA56333." evidence="5" ref="2">
    <original>D</original>
    <variation>A</variation>
    <location>
        <position position="115"/>
    </location>
</feature>
<feature type="sequence conflict" description="In Ref. 2; CAA56333." evidence="5" ref="2">
    <original>E</original>
    <variation>G</variation>
    <location>
        <position position="152"/>
    </location>
</feature>
<feature type="sequence conflict" description="In Ref. 2; CAA56333." evidence="5" ref="2">
    <original>G</original>
    <variation>R</variation>
    <location>
        <position position="158"/>
    </location>
</feature>
<feature type="sequence conflict" description="In Ref. 2; CAA56333." evidence="5" ref="2">
    <original>A</original>
    <variation>G</variation>
    <location>
        <position position="170"/>
    </location>
</feature>
<feature type="sequence conflict" description="In Ref. 2; CAA56333." evidence="5" ref="2">
    <original>E</original>
    <variation>V</variation>
    <location>
        <position position="194"/>
    </location>
</feature>
<feature type="sequence conflict" description="In Ref. 2; CAA56333." evidence="5" ref="2">
    <location>
        <position position="300"/>
    </location>
</feature>
<feature type="sequence conflict" description="In Ref. 2; CAA56333." evidence="5" ref="2">
    <original>GK</original>
    <variation>ER</variation>
    <location>
        <begin position="513"/>
        <end position="514"/>
    </location>
</feature>
<feature type="sequence conflict" description="In Ref. 2; CAA56333." evidence="5" ref="2">
    <original>C</original>
    <variation>Y</variation>
    <location>
        <position position="618"/>
    </location>
</feature>
<feature type="sequence conflict" description="In Ref. 2; CAA56333." evidence="5" ref="2">
    <original>EK</original>
    <variation>KS</variation>
    <location>
        <begin position="658"/>
        <end position="659"/>
    </location>
</feature>
<feature type="sequence conflict" description="In Ref. 2; CAA56333." evidence="5" ref="2">
    <original>E</original>
    <variation>A</variation>
    <location>
        <position position="745"/>
    </location>
</feature>
<feature type="sequence conflict" description="In Ref. 2; CAA56333." evidence="5" ref="2">
    <original>IA</original>
    <variation>MP</variation>
    <location>
        <begin position="805"/>
        <end position="806"/>
    </location>
</feature>
<feature type="sequence conflict" description="In Ref. 2; CAA56333." evidence="5" ref="2">
    <original>G</original>
    <variation>A</variation>
    <location>
        <position position="844"/>
    </location>
</feature>
<feature type="sequence conflict" description="In Ref. 2; CAA56333." evidence="5" ref="2">
    <original>S</original>
    <variation>C</variation>
    <location>
        <position position="915"/>
    </location>
</feature>
<feature type="sequence conflict" description="In Ref. 2; CAA56333." evidence="5" ref="2">
    <original>KSENISPEEEY</original>
    <variation>NQRTLVQEEDI</variation>
    <location>
        <begin position="983"/>
        <end position="993"/>
    </location>
</feature>
<feature type="sequence conflict" description="In Ref. 2; CAA56333." evidence="5" ref="2">
    <original>AKAINQIAAALFTIHKGSIE</original>
    <variation>PKPSTKLLLLCLQFTKEALK</variation>
    <location>
        <begin position="1033"/>
        <end position="1052"/>
    </location>
</feature>
<gene>
    <name type="primary">Nckap1</name>
    <name type="synonym">Hem2</name>
    <name type="synonym">Nap1</name>
</gene>
<dbReference type="EMBL" id="D84346">
    <property type="protein sequence ID" value="BAA12319.1"/>
    <property type="molecule type" value="mRNA"/>
</dbReference>
<dbReference type="EMBL" id="X80029">
    <property type="protein sequence ID" value="CAA56333.1"/>
    <property type="molecule type" value="mRNA"/>
</dbReference>
<dbReference type="PIR" id="S57833">
    <property type="entry name" value="S57833"/>
</dbReference>
<dbReference type="RefSeq" id="NP_113806.1">
    <property type="nucleotide sequence ID" value="NM_031618.1"/>
</dbReference>
<dbReference type="SMR" id="P55161"/>
<dbReference type="BioGRID" id="248630">
    <property type="interactions" value="4"/>
</dbReference>
<dbReference type="FunCoup" id="P55161">
    <property type="interactions" value="3556"/>
</dbReference>
<dbReference type="IntAct" id="P55161">
    <property type="interactions" value="2"/>
</dbReference>
<dbReference type="MINT" id="P55161"/>
<dbReference type="STRING" id="10116.ENSRNOP00000059233"/>
<dbReference type="GlyGen" id="P55161">
    <property type="glycosylation" value="1 site, 1 O-linked glycan (1 site)"/>
</dbReference>
<dbReference type="iPTMnet" id="P55161"/>
<dbReference type="PhosphoSitePlus" id="P55161"/>
<dbReference type="jPOST" id="P55161"/>
<dbReference type="PaxDb" id="10116-ENSRNOP00000059233"/>
<dbReference type="GeneID" id="58823"/>
<dbReference type="KEGG" id="rno:58823"/>
<dbReference type="UCSC" id="RGD:61939">
    <property type="organism name" value="rat"/>
</dbReference>
<dbReference type="AGR" id="RGD:61939"/>
<dbReference type="CTD" id="10787"/>
<dbReference type="RGD" id="61939">
    <property type="gene designation" value="Nckap1"/>
</dbReference>
<dbReference type="eggNOG" id="KOG1917">
    <property type="taxonomic scope" value="Eukaryota"/>
</dbReference>
<dbReference type="InParanoid" id="P55161"/>
<dbReference type="PhylomeDB" id="P55161"/>
<dbReference type="Reactome" id="R-RNO-2029482">
    <property type="pathway name" value="Regulation of actin dynamics for phagocytic cup formation"/>
</dbReference>
<dbReference type="Reactome" id="R-RNO-4420097">
    <property type="pathway name" value="VEGFA-VEGFR2 Pathway"/>
</dbReference>
<dbReference type="Reactome" id="R-RNO-5663213">
    <property type="pathway name" value="RHO GTPases Activate WASPs and WAVEs"/>
</dbReference>
<dbReference type="Reactome" id="R-RNO-9013149">
    <property type="pathway name" value="RAC1 GTPase cycle"/>
</dbReference>
<dbReference type="Reactome" id="R-RNO-9013404">
    <property type="pathway name" value="RAC2 GTPase cycle"/>
</dbReference>
<dbReference type="PRO" id="PR:P55161"/>
<dbReference type="Proteomes" id="UP000002494">
    <property type="component" value="Unplaced"/>
</dbReference>
<dbReference type="GO" id="GO:0031941">
    <property type="term" value="C:filamentous actin"/>
    <property type="evidence" value="ECO:0000266"/>
    <property type="project" value="RGD"/>
</dbReference>
<dbReference type="GO" id="GO:0098978">
    <property type="term" value="C:glutamatergic synapse"/>
    <property type="evidence" value="ECO:0000314"/>
    <property type="project" value="SynGO"/>
</dbReference>
<dbReference type="GO" id="GO:0030027">
    <property type="term" value="C:lamellipodium"/>
    <property type="evidence" value="ECO:0000266"/>
    <property type="project" value="RGD"/>
</dbReference>
<dbReference type="GO" id="GO:0031258">
    <property type="term" value="C:lamellipodium membrane"/>
    <property type="evidence" value="ECO:0007669"/>
    <property type="project" value="UniProtKB-SubCell"/>
</dbReference>
<dbReference type="GO" id="GO:0098794">
    <property type="term" value="C:postsynapse"/>
    <property type="evidence" value="ECO:0000266"/>
    <property type="project" value="RGD"/>
</dbReference>
<dbReference type="GO" id="GO:0014069">
    <property type="term" value="C:postsynaptic density"/>
    <property type="evidence" value="ECO:0000314"/>
    <property type="project" value="SynGO"/>
</dbReference>
<dbReference type="GO" id="GO:0001726">
    <property type="term" value="C:ruffle"/>
    <property type="evidence" value="ECO:0000266"/>
    <property type="project" value="RGD"/>
</dbReference>
<dbReference type="GO" id="GO:0031209">
    <property type="term" value="C:SCAR complex"/>
    <property type="evidence" value="ECO:0000266"/>
    <property type="project" value="RGD"/>
</dbReference>
<dbReference type="GO" id="GO:0045176">
    <property type="term" value="P:apical protein localization"/>
    <property type="evidence" value="ECO:0000266"/>
    <property type="project" value="RGD"/>
</dbReference>
<dbReference type="GO" id="GO:0045175">
    <property type="term" value="P:basal protein localization"/>
    <property type="evidence" value="ECO:0000266"/>
    <property type="project" value="RGD"/>
</dbReference>
<dbReference type="GO" id="GO:0016477">
    <property type="term" value="P:cell migration"/>
    <property type="evidence" value="ECO:0000318"/>
    <property type="project" value="GO_Central"/>
</dbReference>
<dbReference type="GO" id="GO:0042074">
    <property type="term" value="P:cell migration involved in gastrulation"/>
    <property type="evidence" value="ECO:0000266"/>
    <property type="project" value="RGD"/>
</dbReference>
<dbReference type="GO" id="GO:0000902">
    <property type="term" value="P:cell morphogenesis"/>
    <property type="evidence" value="ECO:0000318"/>
    <property type="project" value="GO_Central"/>
</dbReference>
<dbReference type="GO" id="GO:0030031">
    <property type="term" value="P:cell projection assembly"/>
    <property type="evidence" value="ECO:0000318"/>
    <property type="project" value="GO_Central"/>
</dbReference>
<dbReference type="GO" id="GO:0030866">
    <property type="term" value="P:cortical actin cytoskeleton organization"/>
    <property type="evidence" value="ECO:0000318"/>
    <property type="project" value="GO_Central"/>
</dbReference>
<dbReference type="GO" id="GO:0010172">
    <property type="term" value="P:embryonic body morphogenesis"/>
    <property type="evidence" value="ECO:0000266"/>
    <property type="project" value="RGD"/>
</dbReference>
<dbReference type="GO" id="GO:0048617">
    <property type="term" value="P:embryonic foregut morphogenesis"/>
    <property type="evidence" value="ECO:0000266"/>
    <property type="project" value="RGD"/>
</dbReference>
<dbReference type="GO" id="GO:0035050">
    <property type="term" value="P:embryonic heart tube development"/>
    <property type="evidence" value="ECO:0000266"/>
    <property type="project" value="RGD"/>
</dbReference>
<dbReference type="GO" id="GO:0007492">
    <property type="term" value="P:endoderm development"/>
    <property type="evidence" value="ECO:0000266"/>
    <property type="project" value="RGD"/>
</dbReference>
<dbReference type="GO" id="GO:0030950">
    <property type="term" value="P:establishment or maintenance of actin cytoskeleton polarity"/>
    <property type="evidence" value="ECO:0000266"/>
    <property type="project" value="RGD"/>
</dbReference>
<dbReference type="GO" id="GO:0001701">
    <property type="term" value="P:in utero embryonic development"/>
    <property type="evidence" value="ECO:0000266"/>
    <property type="project" value="RGD"/>
</dbReference>
<dbReference type="GO" id="GO:0030032">
    <property type="term" value="P:lamellipodium assembly"/>
    <property type="evidence" value="ECO:0000266"/>
    <property type="project" value="RGD"/>
</dbReference>
<dbReference type="GO" id="GO:0008078">
    <property type="term" value="P:mesodermal cell migration"/>
    <property type="evidence" value="ECO:0000266"/>
    <property type="project" value="RGD"/>
</dbReference>
<dbReference type="GO" id="GO:0001843">
    <property type="term" value="P:neural tube closure"/>
    <property type="evidence" value="ECO:0000266"/>
    <property type="project" value="RGD"/>
</dbReference>
<dbReference type="GO" id="GO:0048812">
    <property type="term" value="P:neuron projection morphogenesis"/>
    <property type="evidence" value="ECO:0000318"/>
    <property type="project" value="GO_Central"/>
</dbReference>
<dbReference type="GO" id="GO:0030903">
    <property type="term" value="P:notochord development"/>
    <property type="evidence" value="ECO:0000266"/>
    <property type="project" value="RGD"/>
</dbReference>
<dbReference type="GO" id="GO:0048570">
    <property type="term" value="P:notochord morphogenesis"/>
    <property type="evidence" value="ECO:0000266"/>
    <property type="project" value="RGD"/>
</dbReference>
<dbReference type="GO" id="GO:0048339">
    <property type="term" value="P:paraxial mesoderm development"/>
    <property type="evidence" value="ECO:0000266"/>
    <property type="project" value="RGD"/>
</dbReference>
<dbReference type="GO" id="GO:0048340">
    <property type="term" value="P:paraxial mesoderm morphogenesis"/>
    <property type="evidence" value="ECO:0000266"/>
    <property type="project" value="RGD"/>
</dbReference>
<dbReference type="GO" id="GO:0030838">
    <property type="term" value="P:positive regulation of actin filament polymerization"/>
    <property type="evidence" value="ECO:0000266"/>
    <property type="project" value="RGD"/>
</dbReference>
<dbReference type="GO" id="GO:2000601">
    <property type="term" value="P:positive regulation of Arp2/3 complex-mediated actin nucleation"/>
    <property type="evidence" value="ECO:0000266"/>
    <property type="project" value="RGD"/>
</dbReference>
<dbReference type="GO" id="GO:0010592">
    <property type="term" value="P:positive regulation of lamellipodium assembly"/>
    <property type="evidence" value="ECO:0000266"/>
    <property type="project" value="RGD"/>
</dbReference>
<dbReference type="GO" id="GO:0050821">
    <property type="term" value="P:protein stabilization"/>
    <property type="evidence" value="ECO:0000266"/>
    <property type="project" value="RGD"/>
</dbReference>
<dbReference type="GO" id="GO:0016601">
    <property type="term" value="P:Rac protein signal transduction"/>
    <property type="evidence" value="ECO:0000266"/>
    <property type="project" value="RGD"/>
</dbReference>
<dbReference type="GO" id="GO:0032880">
    <property type="term" value="P:regulation of protein localization"/>
    <property type="evidence" value="ECO:0000266"/>
    <property type="project" value="RGD"/>
</dbReference>
<dbReference type="GO" id="GO:0001756">
    <property type="term" value="P:somitogenesis"/>
    <property type="evidence" value="ECO:0000266"/>
    <property type="project" value="RGD"/>
</dbReference>
<dbReference type="GO" id="GO:0007354">
    <property type="term" value="P:zygotic determination of anterior/posterior axis, embryo"/>
    <property type="evidence" value="ECO:0000266"/>
    <property type="project" value="RGD"/>
</dbReference>
<dbReference type="InterPro" id="IPR019137">
    <property type="entry name" value="Nck-associated_protein-1"/>
</dbReference>
<dbReference type="PANTHER" id="PTHR12093">
    <property type="entry name" value="NCK-ASSOCIATED PROTEIN 1"/>
    <property type="match status" value="1"/>
</dbReference>
<dbReference type="PANTHER" id="PTHR12093:SF11">
    <property type="entry name" value="NCK-ASSOCIATED PROTEIN 1"/>
    <property type="match status" value="1"/>
</dbReference>
<dbReference type="Pfam" id="PF09735">
    <property type="entry name" value="Nckap1"/>
    <property type="match status" value="1"/>
</dbReference>
<proteinExistence type="evidence at transcript level"/>
<sequence>MSRSVLQPSQQKLAEKLTILNDRGVGMLTRLYNIKKACGDPKAKPSYLIDKNLESAVKFIVRKFPAVETRNNNQQLAQLQKEKSEILKNLALYYFTFVDVMEFKDHVCDLLNTIDVCQVFFDITVNFDLTKNYLDLTVTYTTLMILLSRIEERKAIIGLYNYAHEMTHGASDREYPRLGQMIVDYEHPLKKMMEEFVPHSKSLSDALISLQMVYPRRNLSADQWRNAQLLSLISAPSTMLNPAQSDTMPCEYLSLDAMEKWIIFGFILCHGMLNTEATALNLWKLALQSSSCLSLFRDEVFHIHKAAEDLFVNIRGYNKRINDIRECKEAAVSHAGSMHRERRKFLRSALKELATVLSDQPGLLGPKALFVFMALSFARDEIIWLLRHADNMPKKSADDFIDKHIAELIFYMEELRAHVRKYGPVMQRYYVQYLSGFDAVVLNELVQNLSVCPEDESIIMSSFVNTMTSLSVKQVEDGEVFDFRGMRLDWFRLQAYTSVSKASLSLADHRELGKMMNTIIFHTKMVDSLVEMLVETSDLSIFCFYSRAFEKMFQQCLELPSQSRYSIAFPLLCTHFMSCTHELCPEERHHIGDRSLSLCNMFLDEMAKQARNLITDICTEQCTLSDQLLPKHCAKTISQAVNKKSKKQTGKKGEPEREKPGVESMRKNRLVVTNLDKLHTALSELCFSINYVPNMAVWEHTFTPREYLTSHLEIRFTKSIVGMTMYNQATQEIAKPSELLTSVREYMTVLQSIENYVQIDITRVFNNVLLQQTQHLDSHGEPTITSLYTNWYLETLLRQVSNGHIAYFPAMKAFVNLPTENELTFNAEEYSDISEMRSLSELLGPYGMKFLSESLMWHISSQVAELKKLVVENVDVLTQMRTSFDKPDQMAALFKRLSSVDSVLKRMTIIGVILSFRSLAQEALRDVLSYHIPFLVSSIEDFKDHIPRETDMKVAMNVYELSSAAGLPCEIDPALVVALSSQKSENISPEEEYKIACLLMVFVAVSLPTLASNVMSQYSPAIEGHCNNIHCLAKAINQIAAALFTIHKGSIEDRLKEFLALASSSLLKIGQETDKTTTRNRESVYLLLDMIVQESPFLTMDLLESCFPYVLLRNAYHAVYKQSVTSSA</sequence>